<sequence length="330" mass="37046">MTLIVTGAAGFIGANIVKALNERGETRIIAVDNLTRADKFKNLVDCEIDDYLDKTEFVERFARGDFGKVRAVFHEGACSDTMETDGRYMMDNNFRYSRAVLDACLAQGTQFLYASSAAIYGGSSRFVEAREFEAPLNVYGYSKFLFDQVIRRVMPSAKSQIAGFRYFNVYGPRESHKGRMASVAFHNFNQFRAEGKVKLFGEYNGYGPGEQTRDFVSVEDVAKVNLHFFDHPQKSGIFNLGTGRAQPFNDIATTVVNTLRALEGQPALTLAEQVEQGLVEYVPFPDALRGKYQCFTQADQTKLRAAGYDAPFLTVQEGVDRYVRWLFGQL</sequence>
<accession>A3NXW3</accession>
<proteinExistence type="inferred from homology"/>
<protein>
    <recommendedName>
        <fullName evidence="1">ADP-L-glycero-D-manno-heptose-6-epimerase</fullName>
        <ecNumber evidence="1">5.1.3.20</ecNumber>
    </recommendedName>
    <alternativeName>
        <fullName evidence="1">ADP-L-glycero-beta-D-manno-heptose-6-epimerase</fullName>
        <shortName evidence="1">ADP-glyceromanno-heptose 6-epimerase</shortName>
        <shortName evidence="1">ADP-hep 6-epimerase</shortName>
        <shortName evidence="1">AGME</shortName>
    </alternativeName>
</protein>
<reference key="1">
    <citation type="journal article" date="2010" name="Genome Biol. Evol.">
        <title>Continuing evolution of Burkholderia mallei through genome reduction and large-scale rearrangements.</title>
        <authorList>
            <person name="Losada L."/>
            <person name="Ronning C.M."/>
            <person name="DeShazer D."/>
            <person name="Woods D."/>
            <person name="Fedorova N."/>
            <person name="Kim H.S."/>
            <person name="Shabalina S.A."/>
            <person name="Pearson T.R."/>
            <person name="Brinkac L."/>
            <person name="Tan P."/>
            <person name="Nandi T."/>
            <person name="Crabtree J."/>
            <person name="Badger J."/>
            <person name="Beckstrom-Sternberg S."/>
            <person name="Saqib M."/>
            <person name="Schutzer S.E."/>
            <person name="Keim P."/>
            <person name="Nierman W.C."/>
        </authorList>
    </citation>
    <scope>NUCLEOTIDE SEQUENCE [LARGE SCALE GENOMIC DNA]</scope>
    <source>
        <strain>1106a</strain>
    </source>
</reference>
<comment type="function">
    <text evidence="1">Catalyzes the interconversion between ADP-D-glycero-beta-D-manno-heptose and ADP-L-glycero-beta-D-manno-heptose via an epimerization at carbon 6 of the heptose.</text>
</comment>
<comment type="catalytic activity">
    <reaction evidence="1">
        <text>ADP-D-glycero-beta-D-manno-heptose = ADP-L-glycero-beta-D-manno-heptose</text>
        <dbReference type="Rhea" id="RHEA:17577"/>
        <dbReference type="ChEBI" id="CHEBI:59967"/>
        <dbReference type="ChEBI" id="CHEBI:61506"/>
        <dbReference type="EC" id="5.1.3.20"/>
    </reaction>
</comment>
<comment type="cofactor">
    <cofactor evidence="1">
        <name>NADP(+)</name>
        <dbReference type="ChEBI" id="CHEBI:58349"/>
    </cofactor>
    <text evidence="1">Binds 1 NADP(+) per subunit.</text>
</comment>
<comment type="pathway">
    <text evidence="1">Nucleotide-sugar biosynthesis; ADP-L-glycero-beta-D-manno-heptose biosynthesis; ADP-L-glycero-beta-D-manno-heptose from D-glycero-beta-D-manno-heptose 7-phosphate: step 4/4.</text>
</comment>
<comment type="subunit">
    <text evidence="1">Homopentamer.</text>
</comment>
<comment type="domain">
    <text evidence="1">Contains a large N-terminal NADP-binding domain, and a smaller C-terminal substrate-binding domain.</text>
</comment>
<comment type="similarity">
    <text evidence="1">Belongs to the NAD(P)-dependent epimerase/dehydratase family. HldD subfamily.</text>
</comment>
<gene>
    <name evidence="1" type="primary">hldD</name>
    <name type="ordered locus">BURPS1106A_2939</name>
</gene>
<dbReference type="EC" id="5.1.3.20" evidence="1"/>
<dbReference type="EMBL" id="CP000572">
    <property type="protein sequence ID" value="ABN90721.1"/>
    <property type="molecule type" value="Genomic_DNA"/>
</dbReference>
<dbReference type="SMR" id="A3NXW3"/>
<dbReference type="KEGG" id="bpl:BURPS1106A_2939"/>
<dbReference type="HOGENOM" id="CLU_007383_1_3_4"/>
<dbReference type="UniPathway" id="UPA00356">
    <property type="reaction ID" value="UER00440"/>
</dbReference>
<dbReference type="Proteomes" id="UP000006738">
    <property type="component" value="Chromosome I"/>
</dbReference>
<dbReference type="GO" id="GO:0008712">
    <property type="term" value="F:ADP-glyceromanno-heptose 6-epimerase activity"/>
    <property type="evidence" value="ECO:0007669"/>
    <property type="project" value="UniProtKB-UniRule"/>
</dbReference>
<dbReference type="GO" id="GO:0050661">
    <property type="term" value="F:NADP binding"/>
    <property type="evidence" value="ECO:0007669"/>
    <property type="project" value="InterPro"/>
</dbReference>
<dbReference type="GO" id="GO:0097171">
    <property type="term" value="P:ADP-L-glycero-beta-D-manno-heptose biosynthetic process"/>
    <property type="evidence" value="ECO:0007669"/>
    <property type="project" value="UniProtKB-UniPathway"/>
</dbReference>
<dbReference type="GO" id="GO:0005975">
    <property type="term" value="P:carbohydrate metabolic process"/>
    <property type="evidence" value="ECO:0007669"/>
    <property type="project" value="UniProtKB-UniRule"/>
</dbReference>
<dbReference type="CDD" id="cd05248">
    <property type="entry name" value="ADP_GME_SDR_e"/>
    <property type="match status" value="1"/>
</dbReference>
<dbReference type="Gene3D" id="3.40.50.720">
    <property type="entry name" value="NAD(P)-binding Rossmann-like Domain"/>
    <property type="match status" value="1"/>
</dbReference>
<dbReference type="Gene3D" id="3.90.25.10">
    <property type="entry name" value="UDP-galactose 4-epimerase, domain 1"/>
    <property type="match status" value="1"/>
</dbReference>
<dbReference type="HAMAP" id="MF_01601">
    <property type="entry name" value="Heptose_epimerase"/>
    <property type="match status" value="1"/>
</dbReference>
<dbReference type="InterPro" id="IPR001509">
    <property type="entry name" value="Epimerase_deHydtase"/>
</dbReference>
<dbReference type="InterPro" id="IPR011912">
    <property type="entry name" value="Heptose_epim"/>
</dbReference>
<dbReference type="InterPro" id="IPR036291">
    <property type="entry name" value="NAD(P)-bd_dom_sf"/>
</dbReference>
<dbReference type="NCBIfam" id="TIGR02197">
    <property type="entry name" value="heptose_epim"/>
    <property type="match status" value="1"/>
</dbReference>
<dbReference type="PANTHER" id="PTHR43103:SF3">
    <property type="entry name" value="ADP-L-GLYCERO-D-MANNO-HEPTOSE-6-EPIMERASE"/>
    <property type="match status" value="1"/>
</dbReference>
<dbReference type="PANTHER" id="PTHR43103">
    <property type="entry name" value="NUCLEOSIDE-DIPHOSPHATE-SUGAR EPIMERASE"/>
    <property type="match status" value="1"/>
</dbReference>
<dbReference type="Pfam" id="PF01370">
    <property type="entry name" value="Epimerase"/>
    <property type="match status" value="1"/>
</dbReference>
<dbReference type="SUPFAM" id="SSF51735">
    <property type="entry name" value="NAD(P)-binding Rossmann-fold domains"/>
    <property type="match status" value="1"/>
</dbReference>
<organism>
    <name type="scientific">Burkholderia pseudomallei (strain 1106a)</name>
    <dbReference type="NCBI Taxonomy" id="357348"/>
    <lineage>
        <taxon>Bacteria</taxon>
        <taxon>Pseudomonadati</taxon>
        <taxon>Pseudomonadota</taxon>
        <taxon>Betaproteobacteria</taxon>
        <taxon>Burkholderiales</taxon>
        <taxon>Burkholderiaceae</taxon>
        <taxon>Burkholderia</taxon>
        <taxon>pseudomallei group</taxon>
    </lineage>
</organism>
<name>HLDD_BURP0</name>
<keyword id="KW-0119">Carbohydrate metabolism</keyword>
<keyword id="KW-0413">Isomerase</keyword>
<keyword id="KW-0521">NADP</keyword>
<feature type="chain" id="PRO_1000069348" description="ADP-L-glycero-D-manno-heptose-6-epimerase">
    <location>
        <begin position="1"/>
        <end position="330"/>
    </location>
</feature>
<feature type="active site" description="Proton acceptor" evidence="1">
    <location>
        <position position="139"/>
    </location>
</feature>
<feature type="active site" description="Proton acceptor" evidence="1">
    <location>
        <position position="177"/>
    </location>
</feature>
<feature type="binding site" evidence="1">
    <location>
        <begin position="11"/>
        <end position="12"/>
    </location>
    <ligand>
        <name>NADP(+)</name>
        <dbReference type="ChEBI" id="CHEBI:58349"/>
    </ligand>
</feature>
<feature type="binding site" evidence="1">
    <location>
        <begin position="32"/>
        <end position="33"/>
    </location>
    <ligand>
        <name>NADP(+)</name>
        <dbReference type="ChEBI" id="CHEBI:58349"/>
    </ligand>
</feature>
<feature type="binding site" evidence="1">
    <location>
        <position position="39"/>
    </location>
    <ligand>
        <name>NADP(+)</name>
        <dbReference type="ChEBI" id="CHEBI:58349"/>
    </ligand>
</feature>
<feature type="binding site" evidence="1">
    <location>
        <position position="54"/>
    </location>
    <ligand>
        <name>NADP(+)</name>
        <dbReference type="ChEBI" id="CHEBI:58349"/>
    </ligand>
</feature>
<feature type="binding site" evidence="1">
    <location>
        <begin position="75"/>
        <end position="79"/>
    </location>
    <ligand>
        <name>NADP(+)</name>
        <dbReference type="ChEBI" id="CHEBI:58349"/>
    </ligand>
</feature>
<feature type="binding site" evidence="1">
    <location>
        <position position="92"/>
    </location>
    <ligand>
        <name>NADP(+)</name>
        <dbReference type="ChEBI" id="CHEBI:58349"/>
    </ligand>
</feature>
<feature type="binding site" evidence="1">
    <location>
        <position position="143"/>
    </location>
    <ligand>
        <name>NADP(+)</name>
        <dbReference type="ChEBI" id="CHEBI:58349"/>
    </ligand>
</feature>
<feature type="binding site" evidence="1">
    <location>
        <position position="168"/>
    </location>
    <ligand>
        <name>substrate</name>
    </ligand>
</feature>
<feature type="binding site" evidence="1">
    <location>
        <position position="169"/>
    </location>
    <ligand>
        <name>NADP(+)</name>
        <dbReference type="ChEBI" id="CHEBI:58349"/>
    </ligand>
</feature>
<feature type="binding site" evidence="1">
    <location>
        <position position="177"/>
    </location>
    <ligand>
        <name>NADP(+)</name>
        <dbReference type="ChEBI" id="CHEBI:58349"/>
    </ligand>
</feature>
<feature type="binding site" evidence="1">
    <location>
        <position position="179"/>
    </location>
    <ligand>
        <name>substrate</name>
    </ligand>
</feature>
<feature type="binding site" evidence="1">
    <location>
        <position position="186"/>
    </location>
    <ligand>
        <name>substrate</name>
    </ligand>
</feature>
<feature type="binding site" evidence="1">
    <location>
        <begin position="200"/>
        <end position="203"/>
    </location>
    <ligand>
        <name>substrate</name>
    </ligand>
</feature>
<feature type="binding site" evidence="1">
    <location>
        <position position="213"/>
    </location>
    <ligand>
        <name>substrate</name>
    </ligand>
</feature>
<feature type="binding site" evidence="1">
    <location>
        <position position="292"/>
    </location>
    <ligand>
        <name>substrate</name>
    </ligand>
</feature>
<evidence type="ECO:0000255" key="1">
    <source>
        <dbReference type="HAMAP-Rule" id="MF_01601"/>
    </source>
</evidence>